<comment type="catalytic activity">
    <reaction>
        <text>tRNA(Cys) + L-cysteine + ATP = L-cysteinyl-tRNA(Cys) + AMP + diphosphate</text>
        <dbReference type="Rhea" id="RHEA:17773"/>
        <dbReference type="Rhea" id="RHEA-COMP:9661"/>
        <dbReference type="Rhea" id="RHEA-COMP:9679"/>
        <dbReference type="ChEBI" id="CHEBI:30616"/>
        <dbReference type="ChEBI" id="CHEBI:33019"/>
        <dbReference type="ChEBI" id="CHEBI:35235"/>
        <dbReference type="ChEBI" id="CHEBI:78442"/>
        <dbReference type="ChEBI" id="CHEBI:78517"/>
        <dbReference type="ChEBI" id="CHEBI:456215"/>
        <dbReference type="EC" id="6.1.1.16"/>
    </reaction>
</comment>
<comment type="cofactor">
    <cofactor evidence="1">
        <name>Zn(2+)</name>
        <dbReference type="ChEBI" id="CHEBI:29105"/>
    </cofactor>
    <text evidence="1">Binds 1 zinc ion per subunit.</text>
</comment>
<comment type="subunit">
    <text evidence="1">Monomer.</text>
</comment>
<comment type="subcellular location">
    <subcellularLocation>
        <location evidence="1">Cytoplasm</location>
    </subcellularLocation>
</comment>
<comment type="similarity">
    <text evidence="2">Belongs to the class-I aminoacyl-tRNA synthetase family.</text>
</comment>
<proteinExistence type="inferred from homology"/>
<organism>
    <name type="scientific">Vibrio cholerae serotype O1 (strain ATCC 39315 / El Tor Inaba N16961)</name>
    <dbReference type="NCBI Taxonomy" id="243277"/>
    <lineage>
        <taxon>Bacteria</taxon>
        <taxon>Pseudomonadati</taxon>
        <taxon>Pseudomonadota</taxon>
        <taxon>Gammaproteobacteria</taxon>
        <taxon>Vibrionales</taxon>
        <taxon>Vibrionaceae</taxon>
        <taxon>Vibrio</taxon>
    </lineage>
</organism>
<keyword id="KW-0030">Aminoacyl-tRNA synthetase</keyword>
<keyword id="KW-0067">ATP-binding</keyword>
<keyword id="KW-0963">Cytoplasm</keyword>
<keyword id="KW-0436">Ligase</keyword>
<keyword id="KW-0479">Metal-binding</keyword>
<keyword id="KW-0547">Nucleotide-binding</keyword>
<keyword id="KW-0648">Protein biosynthesis</keyword>
<keyword id="KW-1185">Reference proteome</keyword>
<keyword id="KW-0862">Zinc</keyword>
<accession>Q9KQZ9</accession>
<reference key="1">
    <citation type="journal article" date="2000" name="Nature">
        <title>DNA sequence of both chromosomes of the cholera pathogen Vibrio cholerae.</title>
        <authorList>
            <person name="Heidelberg J.F."/>
            <person name="Eisen J.A."/>
            <person name="Nelson W.C."/>
            <person name="Clayton R.A."/>
            <person name="Gwinn M.L."/>
            <person name="Dodson R.J."/>
            <person name="Haft D.H."/>
            <person name="Hickey E.K."/>
            <person name="Peterson J.D."/>
            <person name="Umayam L.A."/>
            <person name="Gill S.R."/>
            <person name="Nelson K.E."/>
            <person name="Read T.D."/>
            <person name="Tettelin H."/>
            <person name="Richardson D.L."/>
            <person name="Ermolaeva M.D."/>
            <person name="Vamathevan J.J."/>
            <person name="Bass S."/>
            <person name="Qin H."/>
            <person name="Dragoi I."/>
            <person name="Sellers P."/>
            <person name="McDonald L.A."/>
            <person name="Utterback T.R."/>
            <person name="Fleischmann R.D."/>
            <person name="Nierman W.C."/>
            <person name="White O."/>
            <person name="Salzberg S.L."/>
            <person name="Smith H.O."/>
            <person name="Colwell R.R."/>
            <person name="Mekalanos J.J."/>
            <person name="Venter J.C."/>
            <person name="Fraser C.M."/>
        </authorList>
    </citation>
    <scope>NUCLEOTIDE SEQUENCE [LARGE SCALE GENOMIC DNA]</scope>
    <source>
        <strain>ATCC 39315 / El Tor Inaba N16961</strain>
    </source>
</reference>
<name>SYC_VIBCH</name>
<sequence length="459" mass="52034">MLKIYNSLTRQKEEFKPIVAGKVGMYVCGVTIYDLCHIGHGRTFVSFDVVARYLRYLGYDLTFVRNITDIDDKIIKRAAENAETCESLTERLIQEMYADFDALNIKRPDVEPRATAYIEEIIALVERLIERGFAYVADNGDVMFEVSQYSEYGKLSKQDLDQLQAGARVDIEAAKRSPLDFVLWKMSKPGEPTWESPWGSGRPGWHIECSAMNSSILGTHFDIHGGGSDLQFPHHENEIAQSCCAHDTQYVNTWMHSGMVMVDKEKMSKSLGNFFTIRDVLGHYDAETVRYFLMSGHYRSQLNYSEENLNQARASLERLYNALRGLDRSVPAAGGEEYVTRFTAAMNDDFNTPEAYSVLFDMAREINRLKSEDMTNASALGSLMRELADVIGILYQEPEAFFQGSAEDEDAAQIEALIKLRNDSRATKDWANADLARDKLNEMGIVLEDGPNGTTWRRK</sequence>
<evidence type="ECO:0000250" key="1"/>
<evidence type="ECO:0000305" key="2"/>
<dbReference type="EC" id="6.1.1.16"/>
<dbReference type="EMBL" id="AE003852">
    <property type="protein sequence ID" value="AAF94996.1"/>
    <property type="molecule type" value="Genomic_DNA"/>
</dbReference>
<dbReference type="PIR" id="A82150">
    <property type="entry name" value="A82150"/>
</dbReference>
<dbReference type="RefSeq" id="NP_231482.1">
    <property type="nucleotide sequence ID" value="NC_002505.1"/>
</dbReference>
<dbReference type="RefSeq" id="WP_000913180.1">
    <property type="nucleotide sequence ID" value="NZ_LT906614.1"/>
</dbReference>
<dbReference type="SMR" id="Q9KQZ9"/>
<dbReference type="STRING" id="243277.VC_1848"/>
<dbReference type="DNASU" id="2613602"/>
<dbReference type="EnsemblBacteria" id="AAF94996">
    <property type="protein sequence ID" value="AAF94996"/>
    <property type="gene ID" value="VC_1848"/>
</dbReference>
<dbReference type="KEGG" id="vch:VC_1848"/>
<dbReference type="PATRIC" id="fig|243277.26.peg.1764"/>
<dbReference type="eggNOG" id="COG0215">
    <property type="taxonomic scope" value="Bacteria"/>
</dbReference>
<dbReference type="HOGENOM" id="CLU_013528_0_1_6"/>
<dbReference type="Proteomes" id="UP000000584">
    <property type="component" value="Chromosome 1"/>
</dbReference>
<dbReference type="GO" id="GO:0005737">
    <property type="term" value="C:cytoplasm"/>
    <property type="evidence" value="ECO:0000318"/>
    <property type="project" value="GO_Central"/>
</dbReference>
<dbReference type="GO" id="GO:0005829">
    <property type="term" value="C:cytosol"/>
    <property type="evidence" value="ECO:0000318"/>
    <property type="project" value="GO_Central"/>
</dbReference>
<dbReference type="GO" id="GO:0005524">
    <property type="term" value="F:ATP binding"/>
    <property type="evidence" value="ECO:0000318"/>
    <property type="project" value="GO_Central"/>
</dbReference>
<dbReference type="GO" id="GO:0004817">
    <property type="term" value="F:cysteine-tRNA ligase activity"/>
    <property type="evidence" value="ECO:0000318"/>
    <property type="project" value="GO_Central"/>
</dbReference>
<dbReference type="GO" id="GO:0008270">
    <property type="term" value="F:zinc ion binding"/>
    <property type="evidence" value="ECO:0007669"/>
    <property type="project" value="UniProtKB-UniRule"/>
</dbReference>
<dbReference type="GO" id="GO:0006423">
    <property type="term" value="P:cysteinyl-tRNA aminoacylation"/>
    <property type="evidence" value="ECO:0000318"/>
    <property type="project" value="GO_Central"/>
</dbReference>
<dbReference type="CDD" id="cd07963">
    <property type="entry name" value="Anticodon_Ia_Cys"/>
    <property type="match status" value="1"/>
</dbReference>
<dbReference type="CDD" id="cd00672">
    <property type="entry name" value="CysRS_core"/>
    <property type="match status" value="1"/>
</dbReference>
<dbReference type="FunFam" id="1.20.120.1910:FF:000001">
    <property type="entry name" value="Cysteine--tRNA ligase"/>
    <property type="match status" value="1"/>
</dbReference>
<dbReference type="FunFam" id="3.40.50.620:FF:000009">
    <property type="entry name" value="Cysteine--tRNA ligase"/>
    <property type="match status" value="1"/>
</dbReference>
<dbReference type="Gene3D" id="1.20.120.1910">
    <property type="entry name" value="Cysteine-tRNA ligase, C-terminal anti-codon recognition domain"/>
    <property type="match status" value="1"/>
</dbReference>
<dbReference type="Gene3D" id="3.40.50.620">
    <property type="entry name" value="HUPs"/>
    <property type="match status" value="1"/>
</dbReference>
<dbReference type="HAMAP" id="MF_00041">
    <property type="entry name" value="Cys_tRNA_synth"/>
    <property type="match status" value="1"/>
</dbReference>
<dbReference type="InterPro" id="IPR015803">
    <property type="entry name" value="Cys-tRNA-ligase"/>
</dbReference>
<dbReference type="InterPro" id="IPR015273">
    <property type="entry name" value="Cys-tRNA-synt_Ia_DALR"/>
</dbReference>
<dbReference type="InterPro" id="IPR024909">
    <property type="entry name" value="Cys-tRNA/MSH_ligase"/>
</dbReference>
<dbReference type="InterPro" id="IPR056411">
    <property type="entry name" value="CysS_C"/>
</dbReference>
<dbReference type="InterPro" id="IPR014729">
    <property type="entry name" value="Rossmann-like_a/b/a_fold"/>
</dbReference>
<dbReference type="InterPro" id="IPR032678">
    <property type="entry name" value="tRNA-synt_1_cat_dom"/>
</dbReference>
<dbReference type="InterPro" id="IPR009080">
    <property type="entry name" value="tRNAsynth_Ia_anticodon-bd"/>
</dbReference>
<dbReference type="NCBIfam" id="TIGR00435">
    <property type="entry name" value="cysS"/>
    <property type="match status" value="1"/>
</dbReference>
<dbReference type="PANTHER" id="PTHR10890:SF3">
    <property type="entry name" value="CYSTEINE--TRNA LIGASE, CYTOPLASMIC"/>
    <property type="match status" value="1"/>
</dbReference>
<dbReference type="PANTHER" id="PTHR10890">
    <property type="entry name" value="CYSTEINYL-TRNA SYNTHETASE"/>
    <property type="match status" value="1"/>
</dbReference>
<dbReference type="Pfam" id="PF23493">
    <property type="entry name" value="CysS_C"/>
    <property type="match status" value="1"/>
</dbReference>
<dbReference type="Pfam" id="PF09190">
    <property type="entry name" value="DALR_2"/>
    <property type="match status" value="1"/>
</dbReference>
<dbReference type="Pfam" id="PF01406">
    <property type="entry name" value="tRNA-synt_1e"/>
    <property type="match status" value="1"/>
</dbReference>
<dbReference type="PRINTS" id="PR00983">
    <property type="entry name" value="TRNASYNTHCYS"/>
</dbReference>
<dbReference type="SMART" id="SM00840">
    <property type="entry name" value="DALR_2"/>
    <property type="match status" value="1"/>
</dbReference>
<dbReference type="SUPFAM" id="SSF47323">
    <property type="entry name" value="Anticodon-binding domain of a subclass of class I aminoacyl-tRNA synthetases"/>
    <property type="match status" value="1"/>
</dbReference>
<dbReference type="SUPFAM" id="SSF52374">
    <property type="entry name" value="Nucleotidylyl transferase"/>
    <property type="match status" value="1"/>
</dbReference>
<gene>
    <name type="primary">cysS</name>
    <name type="ordered locus">VC_1848</name>
</gene>
<protein>
    <recommendedName>
        <fullName>Cysteine--tRNA ligase</fullName>
        <ecNumber>6.1.1.16</ecNumber>
    </recommendedName>
    <alternativeName>
        <fullName>Cysteinyl-tRNA synthetase</fullName>
        <shortName>CysRS</shortName>
    </alternativeName>
</protein>
<feature type="chain" id="PRO_0000159517" description="Cysteine--tRNA ligase">
    <location>
        <begin position="1"/>
        <end position="459"/>
    </location>
</feature>
<feature type="short sequence motif" description="'HIGH' region">
    <location>
        <begin position="30"/>
        <end position="40"/>
    </location>
</feature>
<feature type="short sequence motif" description="'KMSKS' region">
    <location>
        <begin position="266"/>
        <end position="270"/>
    </location>
</feature>
<feature type="binding site" evidence="1">
    <location>
        <position position="28"/>
    </location>
    <ligand>
        <name>Zn(2+)</name>
        <dbReference type="ChEBI" id="CHEBI:29105"/>
    </ligand>
</feature>
<feature type="binding site" evidence="1">
    <location>
        <position position="209"/>
    </location>
    <ligand>
        <name>Zn(2+)</name>
        <dbReference type="ChEBI" id="CHEBI:29105"/>
    </ligand>
</feature>
<feature type="binding site" evidence="1">
    <location>
        <position position="234"/>
    </location>
    <ligand>
        <name>Zn(2+)</name>
        <dbReference type="ChEBI" id="CHEBI:29105"/>
    </ligand>
</feature>
<feature type="binding site" evidence="1">
    <location>
        <position position="238"/>
    </location>
    <ligand>
        <name>Zn(2+)</name>
        <dbReference type="ChEBI" id="CHEBI:29105"/>
    </ligand>
</feature>
<feature type="binding site" evidence="1">
    <location>
        <position position="269"/>
    </location>
    <ligand>
        <name>ATP</name>
        <dbReference type="ChEBI" id="CHEBI:30616"/>
    </ligand>
</feature>